<gene>
    <name type="ordered locus">VVA0294</name>
</gene>
<accession>Q7MFM6</accession>
<keyword id="KW-0349">Heme</keyword>
<keyword id="KW-0376">Hydrogen peroxide</keyword>
<keyword id="KW-0408">Iron</keyword>
<keyword id="KW-0479">Metal-binding</keyword>
<keyword id="KW-0560">Oxidoreductase</keyword>
<keyword id="KW-0574">Periplasm</keyword>
<keyword id="KW-0575">Peroxidase</keyword>
<keyword id="KW-0732">Signal</keyword>
<evidence type="ECO:0000250" key="1"/>
<evidence type="ECO:0000255" key="2"/>
<evidence type="ECO:0000255" key="3">
    <source>
        <dbReference type="PROSITE-ProRule" id="PRU10013"/>
    </source>
</evidence>
<evidence type="ECO:0000256" key="4">
    <source>
        <dbReference type="SAM" id="MobiDB-lite"/>
    </source>
</evidence>
<evidence type="ECO:0000305" key="5"/>
<proteinExistence type="inferred from homology"/>
<feature type="signal peptide" evidence="2">
    <location>
        <begin position="1"/>
        <end position="21"/>
    </location>
</feature>
<feature type="chain" id="PRO_0000004692" description="Catalase">
    <location>
        <begin position="22"/>
        <end position="508"/>
    </location>
</feature>
<feature type="region of interest" description="Disordered" evidence="4">
    <location>
        <begin position="373"/>
        <end position="396"/>
    </location>
</feature>
<feature type="compositionally biased region" description="Polar residues" evidence="4">
    <location>
        <begin position="373"/>
        <end position="392"/>
    </location>
</feature>
<feature type="active site" evidence="3">
    <location>
        <position position="72"/>
    </location>
</feature>
<feature type="active site" evidence="3">
    <location>
        <position position="145"/>
    </location>
</feature>
<feature type="binding site" description="axial binding residue" evidence="1">
    <location>
        <position position="353"/>
    </location>
    <ligand>
        <name>heme</name>
        <dbReference type="ChEBI" id="CHEBI:30413"/>
    </ligand>
    <ligandPart>
        <name>Fe</name>
        <dbReference type="ChEBI" id="CHEBI:18248"/>
    </ligandPart>
</feature>
<protein>
    <recommendedName>
        <fullName>Catalase</fullName>
        <ecNumber>1.11.1.6</ecNumber>
    </recommendedName>
</protein>
<organism>
    <name type="scientific">Vibrio vulnificus (strain YJ016)</name>
    <dbReference type="NCBI Taxonomy" id="196600"/>
    <lineage>
        <taxon>Bacteria</taxon>
        <taxon>Pseudomonadati</taxon>
        <taxon>Pseudomonadota</taxon>
        <taxon>Gammaproteobacteria</taxon>
        <taxon>Vibrionales</taxon>
        <taxon>Vibrionaceae</taxon>
        <taxon>Vibrio</taxon>
    </lineage>
</organism>
<dbReference type="EC" id="1.11.1.6"/>
<dbReference type="EMBL" id="BA000038">
    <property type="protein sequence ID" value="BAC96320.1"/>
    <property type="molecule type" value="Genomic_DNA"/>
</dbReference>
<dbReference type="RefSeq" id="WP_011151700.1">
    <property type="nucleotide sequence ID" value="NC_005140.1"/>
</dbReference>
<dbReference type="SMR" id="Q7MFM6"/>
<dbReference type="STRING" id="672.VV93_v1c32820"/>
<dbReference type="KEGG" id="vvy:VVA0294"/>
<dbReference type="PATRIC" id="fig|196600.6.peg.3501"/>
<dbReference type="eggNOG" id="COG0753">
    <property type="taxonomic scope" value="Bacteria"/>
</dbReference>
<dbReference type="HOGENOM" id="CLU_010645_4_0_6"/>
<dbReference type="Proteomes" id="UP000002675">
    <property type="component" value="Chromosome II"/>
</dbReference>
<dbReference type="GO" id="GO:0005737">
    <property type="term" value="C:cytoplasm"/>
    <property type="evidence" value="ECO:0007669"/>
    <property type="project" value="TreeGrafter"/>
</dbReference>
<dbReference type="GO" id="GO:0042597">
    <property type="term" value="C:periplasmic space"/>
    <property type="evidence" value="ECO:0007669"/>
    <property type="project" value="UniProtKB-SubCell"/>
</dbReference>
<dbReference type="GO" id="GO:0004096">
    <property type="term" value="F:catalase activity"/>
    <property type="evidence" value="ECO:0007669"/>
    <property type="project" value="UniProtKB-EC"/>
</dbReference>
<dbReference type="GO" id="GO:0020037">
    <property type="term" value="F:heme binding"/>
    <property type="evidence" value="ECO:0007669"/>
    <property type="project" value="InterPro"/>
</dbReference>
<dbReference type="GO" id="GO:0046872">
    <property type="term" value="F:metal ion binding"/>
    <property type="evidence" value="ECO:0007669"/>
    <property type="project" value="UniProtKB-KW"/>
</dbReference>
<dbReference type="GO" id="GO:0042744">
    <property type="term" value="P:hydrogen peroxide catabolic process"/>
    <property type="evidence" value="ECO:0007669"/>
    <property type="project" value="UniProtKB-KW"/>
</dbReference>
<dbReference type="GO" id="GO:0042542">
    <property type="term" value="P:response to hydrogen peroxide"/>
    <property type="evidence" value="ECO:0007669"/>
    <property type="project" value="TreeGrafter"/>
</dbReference>
<dbReference type="CDD" id="cd08154">
    <property type="entry name" value="catalase_clade_1"/>
    <property type="match status" value="1"/>
</dbReference>
<dbReference type="Gene3D" id="2.40.180.10">
    <property type="entry name" value="Catalase core domain"/>
    <property type="match status" value="1"/>
</dbReference>
<dbReference type="InterPro" id="IPR018028">
    <property type="entry name" value="Catalase"/>
</dbReference>
<dbReference type="InterPro" id="IPR024708">
    <property type="entry name" value="Catalase_AS"/>
</dbReference>
<dbReference type="InterPro" id="IPR024711">
    <property type="entry name" value="Catalase_clade1/3"/>
</dbReference>
<dbReference type="InterPro" id="IPR011614">
    <property type="entry name" value="Catalase_core"/>
</dbReference>
<dbReference type="InterPro" id="IPR002226">
    <property type="entry name" value="Catalase_haem_BS"/>
</dbReference>
<dbReference type="InterPro" id="IPR010582">
    <property type="entry name" value="Catalase_immune_responsive"/>
</dbReference>
<dbReference type="InterPro" id="IPR020835">
    <property type="entry name" value="Catalase_sf"/>
</dbReference>
<dbReference type="PANTHER" id="PTHR11465">
    <property type="entry name" value="CATALASE"/>
    <property type="match status" value="1"/>
</dbReference>
<dbReference type="PANTHER" id="PTHR11465:SF23">
    <property type="entry name" value="CATALASE-2"/>
    <property type="match status" value="1"/>
</dbReference>
<dbReference type="Pfam" id="PF00199">
    <property type="entry name" value="Catalase"/>
    <property type="match status" value="1"/>
</dbReference>
<dbReference type="Pfam" id="PF06628">
    <property type="entry name" value="Catalase-rel"/>
    <property type="match status" value="1"/>
</dbReference>
<dbReference type="PIRSF" id="PIRSF038928">
    <property type="entry name" value="Catalase_clade1-3"/>
    <property type="match status" value="1"/>
</dbReference>
<dbReference type="PRINTS" id="PR00067">
    <property type="entry name" value="CATALASE"/>
</dbReference>
<dbReference type="SMART" id="SM01060">
    <property type="entry name" value="Catalase"/>
    <property type="match status" value="1"/>
</dbReference>
<dbReference type="SUPFAM" id="SSF56634">
    <property type="entry name" value="Heme-dependent catalase-like"/>
    <property type="match status" value="1"/>
</dbReference>
<dbReference type="PROSITE" id="PS00437">
    <property type="entry name" value="CATALASE_1"/>
    <property type="match status" value="1"/>
</dbReference>
<dbReference type="PROSITE" id="PS00438">
    <property type="entry name" value="CATALASE_2"/>
    <property type="match status" value="1"/>
</dbReference>
<dbReference type="PROSITE" id="PS51402">
    <property type="entry name" value="CATALASE_3"/>
    <property type="match status" value="1"/>
</dbReference>
<name>CATA_VIBVY</name>
<comment type="function">
    <text evidence="1">Decomposes hydrogen peroxide into water and oxygen; serves to protect cells from the toxic effects of hydrogen peroxide.</text>
</comment>
<comment type="catalytic activity">
    <reaction evidence="3">
        <text>2 H2O2 = O2 + 2 H2O</text>
        <dbReference type="Rhea" id="RHEA:20309"/>
        <dbReference type="ChEBI" id="CHEBI:15377"/>
        <dbReference type="ChEBI" id="CHEBI:15379"/>
        <dbReference type="ChEBI" id="CHEBI:16240"/>
        <dbReference type="EC" id="1.11.1.6"/>
    </reaction>
</comment>
<comment type="cofactor">
    <cofactor evidence="1">
        <name>heme</name>
        <dbReference type="ChEBI" id="CHEBI:30413"/>
    </cofactor>
</comment>
<comment type="subcellular location">
    <subcellularLocation>
        <location evidence="5">Periplasm</location>
    </subcellularLocation>
</comment>
<comment type="similarity">
    <text evidence="5">Belongs to the catalase family.</text>
</comment>
<sequence length="508" mass="56608">MHMSKSFLLISMGLASISVHAQTLTRDNGAPVGDNQNSITAGENGSVLLQDVHLIQKLQRFARERIPERVVHARGTGAHGEFVASGDFSDLTLSSPFAQSGKVTPVFVRFSTVIHSKGSPETLRDPRGFATKFYTDQGNWDLVGNNLPVFFIRDSIKFPDMVHSLKPSPVTNLQDPNRFFDFFSSQPSATNMLTWVYTNLGTPASYRTMDGFGVHAYKWINQKGEVNYVKFHWKSQQGVKSLRPAEVTKVQGEDFNHLTNDLYTQINAGNFPKWDLYVKVLSPKALSKLDYNGLDATKVWLDVPEKKVGTMTLNRVPDNFFLETEQSAFAPSNIIPGIEPSEDRLLQGRLFAYADTQLYRLGANLFQLPVNSPKSPVANHNQDGPSNNSTGLGNVDSLDVNYEPSRLVNLTVDKQARAVETPLSGHVQQQAIRNPRDFFQAGVLYRSLSEQDKADLIHNLSGDLNKVNDAEVKAIMVSYFYRADKEYGTRLAKATDVNLKQVTKLASM</sequence>
<reference key="1">
    <citation type="journal article" date="2003" name="Genome Res.">
        <title>Comparative genome analysis of Vibrio vulnificus, a marine pathogen.</title>
        <authorList>
            <person name="Chen C.-Y."/>
            <person name="Wu K.-M."/>
            <person name="Chang Y.-C."/>
            <person name="Chang C.-H."/>
            <person name="Tsai H.-C."/>
            <person name="Liao T.-L."/>
            <person name="Liu Y.-M."/>
            <person name="Chen H.-J."/>
            <person name="Shen A.B.-T."/>
            <person name="Li J.-C."/>
            <person name="Su T.-L."/>
            <person name="Shao C.-P."/>
            <person name="Lee C.-T."/>
            <person name="Hor L.-I."/>
            <person name="Tsai S.-F."/>
        </authorList>
    </citation>
    <scope>NUCLEOTIDE SEQUENCE [LARGE SCALE GENOMIC DNA]</scope>
    <source>
        <strain>YJ016</strain>
    </source>
</reference>